<comment type="function">
    <text evidence="1">Negative regulator of FtsZ ring formation; modulates the frequency and position of FtsZ ring formation. Inhibits FtsZ ring formation at polar sites. Interacts either with FtsZ or with one of its binding partners to promote depolymerization.</text>
</comment>
<comment type="subcellular location">
    <subcellularLocation>
        <location evidence="1">Cell membrane</location>
        <topology evidence="1">Single-pass membrane protein</topology>
    </subcellularLocation>
    <text evidence="1">Colocalized with FtsZ to the nascent septal site.</text>
</comment>
<comment type="similarity">
    <text evidence="1">Belongs to the EzrA family.</text>
</comment>
<keyword id="KW-0131">Cell cycle</keyword>
<keyword id="KW-0132">Cell division</keyword>
<keyword id="KW-1003">Cell membrane</keyword>
<keyword id="KW-0175">Coiled coil</keyword>
<keyword id="KW-0472">Membrane</keyword>
<keyword id="KW-0717">Septation</keyword>
<keyword id="KW-0812">Transmembrane</keyword>
<keyword id="KW-1133">Transmembrane helix</keyword>
<sequence length="570" mass="66436">MDSILTIVIIVVSSILVLLMIELVIRNRSYKDIEALEQWKQEIKDKPVADELKRVKDLNMTGQTEELFGKWREEWDEIVSTTIPKADKDLAQARKFASQFSFRKAKHAMNESISGLDDADNRITDILNELQQLLESHEKNSSEIEGLRDTYRSMKKSVLAHRHMYGAAEQKIEEMLDAESEKFKTFEEATNNGDYLKAREIVISLEEGLADLEIIIHQIPDLLVECQATLPVQLEDLLHGHNDMVRQGYVLDYLEVPKEVRDMTKQLQTCLIDIQELHITEAAEKVENLKTRLDGFYDQLEQEVHARHYVEQKTLSVYEDLEEIRTETIETKAETQLVKQSYQLQDKDIESQKVIEKQMHILTKRFEMLQLRVAEQDIAFSIIREELEEIYEQCETLKVLHAEYKEMLQTMRKEEFEAREKLQEMRNTIFETKRFMQKSNLPGLPESIMEDLKRGQMAMQAVYEQLEVKPLNMNAVNSSLEEAYTTVNGVAEMTEELIGQAYLVEKLIQYGNRYRSHDENLAESLNYAEKLFREYQYDAALEQAASVLEQLEPGVVQKIAEYVDNEQTLS</sequence>
<gene>
    <name evidence="1" type="primary">ezrA</name>
    <name type="ordered locus">BALH_4227</name>
</gene>
<feature type="chain" id="PRO_1000045891" description="Septation ring formation regulator EzrA">
    <location>
        <begin position="1"/>
        <end position="570"/>
    </location>
</feature>
<feature type="topological domain" description="Extracellular" evidence="1">
    <location>
        <begin position="1"/>
        <end position="6"/>
    </location>
</feature>
<feature type="transmembrane region" description="Helical" evidence="1">
    <location>
        <begin position="7"/>
        <end position="25"/>
    </location>
</feature>
<feature type="topological domain" description="Cytoplasmic" evidence="1">
    <location>
        <begin position="26"/>
        <end position="570"/>
    </location>
</feature>
<feature type="coiled-coil region" evidence="1">
    <location>
        <begin position="115"/>
        <end position="149"/>
    </location>
</feature>
<feature type="coiled-coil region" evidence="1">
    <location>
        <begin position="272"/>
        <end position="304"/>
    </location>
</feature>
<feature type="coiled-coil region" evidence="1">
    <location>
        <begin position="355"/>
        <end position="429"/>
    </location>
</feature>
<protein>
    <recommendedName>
        <fullName evidence="1">Septation ring formation regulator EzrA</fullName>
    </recommendedName>
</protein>
<reference key="1">
    <citation type="journal article" date="2007" name="J. Bacteriol.">
        <title>The complete genome sequence of Bacillus thuringiensis Al Hakam.</title>
        <authorList>
            <person name="Challacombe J.F."/>
            <person name="Altherr M.R."/>
            <person name="Xie G."/>
            <person name="Bhotika S.S."/>
            <person name="Brown N."/>
            <person name="Bruce D."/>
            <person name="Campbell C.S."/>
            <person name="Campbell M.L."/>
            <person name="Chen J."/>
            <person name="Chertkov O."/>
            <person name="Cleland C."/>
            <person name="Dimitrijevic M."/>
            <person name="Doggett N.A."/>
            <person name="Fawcett J.J."/>
            <person name="Glavina T."/>
            <person name="Goodwin L.A."/>
            <person name="Green L.D."/>
            <person name="Han C.S."/>
            <person name="Hill K.K."/>
            <person name="Hitchcock P."/>
            <person name="Jackson P.J."/>
            <person name="Keim P."/>
            <person name="Kewalramani A.R."/>
            <person name="Longmire J."/>
            <person name="Lucas S."/>
            <person name="Malfatti S."/>
            <person name="Martinez D."/>
            <person name="McMurry K."/>
            <person name="Meincke L.J."/>
            <person name="Misra M."/>
            <person name="Moseman B.L."/>
            <person name="Mundt M."/>
            <person name="Munk A.C."/>
            <person name="Okinaka R.T."/>
            <person name="Parson-Quintana B."/>
            <person name="Reilly L.P."/>
            <person name="Richardson P."/>
            <person name="Robinson D.L."/>
            <person name="Saunders E."/>
            <person name="Tapia R."/>
            <person name="Tesmer J.G."/>
            <person name="Thayer N."/>
            <person name="Thompson L.S."/>
            <person name="Tice H."/>
            <person name="Ticknor L.O."/>
            <person name="Wills P.L."/>
            <person name="Gilna P."/>
            <person name="Brettin T.S."/>
        </authorList>
    </citation>
    <scope>NUCLEOTIDE SEQUENCE [LARGE SCALE GENOMIC DNA]</scope>
    <source>
        <strain>Al Hakam</strain>
    </source>
</reference>
<proteinExistence type="inferred from homology"/>
<accession>A0RJP1</accession>
<evidence type="ECO:0000255" key="1">
    <source>
        <dbReference type="HAMAP-Rule" id="MF_00728"/>
    </source>
</evidence>
<dbReference type="EMBL" id="CP000485">
    <property type="protein sequence ID" value="ABK87434.1"/>
    <property type="molecule type" value="Genomic_DNA"/>
</dbReference>
<dbReference type="RefSeq" id="WP_000377289.1">
    <property type="nucleotide sequence ID" value="NC_008600.1"/>
</dbReference>
<dbReference type="SMR" id="A0RJP1"/>
<dbReference type="GeneID" id="45024522"/>
<dbReference type="KEGG" id="btl:BALH_4227"/>
<dbReference type="HOGENOM" id="CLU_034079_1_0_9"/>
<dbReference type="GO" id="GO:0005886">
    <property type="term" value="C:plasma membrane"/>
    <property type="evidence" value="ECO:0007669"/>
    <property type="project" value="UniProtKB-SubCell"/>
</dbReference>
<dbReference type="GO" id="GO:0005940">
    <property type="term" value="C:septin ring"/>
    <property type="evidence" value="ECO:0007669"/>
    <property type="project" value="InterPro"/>
</dbReference>
<dbReference type="GO" id="GO:0000917">
    <property type="term" value="P:division septum assembly"/>
    <property type="evidence" value="ECO:0007669"/>
    <property type="project" value="UniProtKB-KW"/>
</dbReference>
<dbReference type="GO" id="GO:0000921">
    <property type="term" value="P:septin ring assembly"/>
    <property type="evidence" value="ECO:0007669"/>
    <property type="project" value="InterPro"/>
</dbReference>
<dbReference type="HAMAP" id="MF_00728">
    <property type="entry name" value="EzrA"/>
    <property type="match status" value="1"/>
</dbReference>
<dbReference type="InterPro" id="IPR010379">
    <property type="entry name" value="EzrA"/>
</dbReference>
<dbReference type="NCBIfam" id="NF003411">
    <property type="entry name" value="PRK04778.1-5"/>
    <property type="match status" value="1"/>
</dbReference>
<dbReference type="NCBIfam" id="NF003413">
    <property type="entry name" value="PRK04778.1-7"/>
    <property type="match status" value="1"/>
</dbReference>
<dbReference type="Pfam" id="PF06160">
    <property type="entry name" value="EzrA"/>
    <property type="match status" value="1"/>
</dbReference>
<organism>
    <name type="scientific">Bacillus thuringiensis (strain Al Hakam)</name>
    <dbReference type="NCBI Taxonomy" id="412694"/>
    <lineage>
        <taxon>Bacteria</taxon>
        <taxon>Bacillati</taxon>
        <taxon>Bacillota</taxon>
        <taxon>Bacilli</taxon>
        <taxon>Bacillales</taxon>
        <taxon>Bacillaceae</taxon>
        <taxon>Bacillus</taxon>
        <taxon>Bacillus cereus group</taxon>
    </lineage>
</organism>
<name>EZRA_BACAH</name>